<reference key="1">
    <citation type="journal article" date="2005" name="Nature">
        <title>Genome sequencing and analysis of Aspergillus oryzae.</title>
        <authorList>
            <person name="Machida M."/>
            <person name="Asai K."/>
            <person name="Sano M."/>
            <person name="Tanaka T."/>
            <person name="Kumagai T."/>
            <person name="Terai G."/>
            <person name="Kusumoto K."/>
            <person name="Arima T."/>
            <person name="Akita O."/>
            <person name="Kashiwagi Y."/>
            <person name="Abe K."/>
            <person name="Gomi K."/>
            <person name="Horiuchi H."/>
            <person name="Kitamoto K."/>
            <person name="Kobayashi T."/>
            <person name="Takeuchi M."/>
            <person name="Denning D.W."/>
            <person name="Galagan J.E."/>
            <person name="Nierman W.C."/>
            <person name="Yu J."/>
            <person name="Archer D.B."/>
            <person name="Bennett J.W."/>
            <person name="Bhatnagar D."/>
            <person name="Cleveland T.E."/>
            <person name="Fedorova N.D."/>
            <person name="Gotoh O."/>
            <person name="Horikawa H."/>
            <person name="Hosoyama A."/>
            <person name="Ichinomiya M."/>
            <person name="Igarashi R."/>
            <person name="Iwashita K."/>
            <person name="Juvvadi P.R."/>
            <person name="Kato M."/>
            <person name="Kato Y."/>
            <person name="Kin T."/>
            <person name="Kokubun A."/>
            <person name="Maeda H."/>
            <person name="Maeyama N."/>
            <person name="Maruyama J."/>
            <person name="Nagasaki H."/>
            <person name="Nakajima T."/>
            <person name="Oda K."/>
            <person name="Okada K."/>
            <person name="Paulsen I."/>
            <person name="Sakamoto K."/>
            <person name="Sawano T."/>
            <person name="Takahashi M."/>
            <person name="Takase K."/>
            <person name="Terabayashi Y."/>
            <person name="Wortman J.R."/>
            <person name="Yamada O."/>
            <person name="Yamagata Y."/>
            <person name="Anazawa H."/>
            <person name="Hata Y."/>
            <person name="Koide Y."/>
            <person name="Komori T."/>
            <person name="Koyama Y."/>
            <person name="Minetoki T."/>
            <person name="Suharnan S."/>
            <person name="Tanaka A."/>
            <person name="Isono K."/>
            <person name="Kuhara S."/>
            <person name="Ogasawara N."/>
            <person name="Kikuchi H."/>
        </authorList>
    </citation>
    <scope>NUCLEOTIDE SEQUENCE [LARGE SCALE GENOMIC DNA]</scope>
    <source>
        <strain>ATCC 42149 / RIB 40</strain>
    </source>
</reference>
<accession>Q2USI0</accession>
<dbReference type="EC" id="3.1.-.-"/>
<dbReference type="EMBL" id="BA000049">
    <property type="protein sequence ID" value="BAE55485.1"/>
    <property type="status" value="ALT_INIT"/>
    <property type="molecule type" value="Genomic_DNA"/>
</dbReference>
<dbReference type="SMR" id="Q2USI0"/>
<dbReference type="STRING" id="510516.Q2USI0"/>
<dbReference type="ESTHER" id="aspor-q2usi0">
    <property type="family name" value="PGAP1"/>
</dbReference>
<dbReference type="GlyCosmos" id="Q2USI0">
    <property type="glycosylation" value="2 sites, No reported glycans"/>
</dbReference>
<dbReference type="EnsemblFungi" id="BAE55485">
    <property type="protein sequence ID" value="BAE55485"/>
    <property type="gene ID" value="AO090005000419"/>
</dbReference>
<dbReference type="Proteomes" id="UP000006564">
    <property type="component" value="Chromosome 1"/>
</dbReference>
<dbReference type="GO" id="GO:0005789">
    <property type="term" value="C:endoplasmic reticulum membrane"/>
    <property type="evidence" value="ECO:0007669"/>
    <property type="project" value="UniProtKB-SubCell"/>
</dbReference>
<dbReference type="GO" id="GO:0050185">
    <property type="term" value="F:phosphatidylinositol deacylase activity"/>
    <property type="evidence" value="ECO:0007669"/>
    <property type="project" value="TreeGrafter"/>
</dbReference>
<dbReference type="GO" id="GO:0006888">
    <property type="term" value="P:endoplasmic reticulum to Golgi vesicle-mediated transport"/>
    <property type="evidence" value="ECO:0007669"/>
    <property type="project" value="TreeGrafter"/>
</dbReference>
<dbReference type="GO" id="GO:0006505">
    <property type="term" value="P:GPI anchor metabolic process"/>
    <property type="evidence" value="ECO:0007669"/>
    <property type="project" value="TreeGrafter"/>
</dbReference>
<dbReference type="GO" id="GO:0015031">
    <property type="term" value="P:protein transport"/>
    <property type="evidence" value="ECO:0007669"/>
    <property type="project" value="UniProtKB-KW"/>
</dbReference>
<dbReference type="FunFam" id="3.40.50.1820:FF:000056">
    <property type="entry name" value="GPI inositol-deacylase"/>
    <property type="match status" value="1"/>
</dbReference>
<dbReference type="Gene3D" id="3.40.50.1820">
    <property type="entry name" value="alpha/beta hydrolase"/>
    <property type="match status" value="1"/>
</dbReference>
<dbReference type="InterPro" id="IPR029058">
    <property type="entry name" value="AB_hydrolase_fold"/>
</dbReference>
<dbReference type="InterPro" id="IPR012908">
    <property type="entry name" value="PGAP1-ab_dom-like"/>
</dbReference>
<dbReference type="InterPro" id="IPR039529">
    <property type="entry name" value="PGAP1/BST1"/>
</dbReference>
<dbReference type="InterPro" id="IPR056824">
    <property type="entry name" value="PGAP1_TMD"/>
</dbReference>
<dbReference type="PANTHER" id="PTHR15495:SF7">
    <property type="entry name" value="GPI INOSITOL-DEACYLASE"/>
    <property type="match status" value="1"/>
</dbReference>
<dbReference type="PANTHER" id="PTHR15495">
    <property type="entry name" value="NEGATIVE REGULATOR OF VESICLE FORMATION-RELATED"/>
    <property type="match status" value="1"/>
</dbReference>
<dbReference type="Pfam" id="PF07819">
    <property type="entry name" value="PGAP1"/>
    <property type="match status" value="1"/>
</dbReference>
<dbReference type="Pfam" id="PF25141">
    <property type="entry name" value="PGAP1_2nd"/>
    <property type="match status" value="1"/>
</dbReference>
<dbReference type="Pfam" id="PF25140">
    <property type="entry name" value="PGAP1_TMD"/>
    <property type="match status" value="1"/>
</dbReference>
<dbReference type="SUPFAM" id="SSF53474">
    <property type="entry name" value="alpha/beta-Hydrolases"/>
    <property type="match status" value="1"/>
</dbReference>
<dbReference type="PROSITE" id="PS00120">
    <property type="entry name" value="LIPASE_SER"/>
    <property type="match status" value="1"/>
</dbReference>
<gene>
    <name type="primary">bst1</name>
    <name type="ORF">AO090005000419</name>
</gene>
<organism>
    <name type="scientific">Aspergillus oryzae (strain ATCC 42149 / RIB 40)</name>
    <name type="common">Yellow koji mold</name>
    <dbReference type="NCBI Taxonomy" id="510516"/>
    <lineage>
        <taxon>Eukaryota</taxon>
        <taxon>Fungi</taxon>
        <taxon>Dikarya</taxon>
        <taxon>Ascomycota</taxon>
        <taxon>Pezizomycotina</taxon>
        <taxon>Eurotiomycetes</taxon>
        <taxon>Eurotiomycetidae</taxon>
        <taxon>Eurotiales</taxon>
        <taxon>Aspergillaceae</taxon>
        <taxon>Aspergillus</taxon>
        <taxon>Aspergillus subgen. Circumdati</taxon>
    </lineage>
</organism>
<protein>
    <recommendedName>
        <fullName>GPI inositol-deacylase</fullName>
        <ecNumber>3.1.-.-</ecNumber>
    </recommendedName>
</protein>
<name>BST1_ASPOR</name>
<sequence>MHRRSSGSPVEDDAEDSLSSRIPPEPSNGPNVVDTPEKSRSQVARTGTSIDLRRDATGASTPRSRNSSMWRTPPSSSMTSNPPDCKSSSVMMPLASQRLPIEASPDHQRRYRPSRLRSPWPCSILTAFTTLVASIFLFFILRSFALRQTGGDGCGVPVMSPTFIRMVGFDTEHTRFASKYNLYLYREGGVDPYSQENLGLNGVPVLFLPGNAGSYRQVRSLAAEASRHYYDVVRHDEDRLNAGTRSLDFFMIDFNEDMAAFHGQTLLDQAEYVNEAVAYILSLYHDPRRSRRDPELPDPSAVVLVGHSMGGIVARTALTMTNYQANSVNTIVTMSAPHAKPPVSFDSDIVQTYKQINDYWREAYSQTWANDNPLWHVTLISIAGGSRDTVVPSDYASISSLVPETHGFTVFTSTIPDVWIGMDHLSITWCDQFRKAIIKSLFEVVDVRRATQTKPRAERMRIFKKWYLTGMETVAERTLPRKGVSGKKFTLLTNQQFDKSGDHGSLEVLFCSVFPLQNGKPATAFSMNMDFSGGTSGSTRLACKNAAEDGIHLPASTPSSKRPYDRVQPFSYLQYDLEDLAEHQFVAVVDKANSPTKGFVLAEFSDSSDSVIRARLGLGSLLSAGLKVRLPANRPMLTELQIPAVHSSLLDYRLKIIRKNHGQQQELFAPLLRQSVADPHESKFFVNVKNVNVNLHGLAPFMPPPLREQATLGGVSFHLWTDPSCDSTIDISLSVDIAGSLGELVMRYRTVFAAFPLLVVALVMRKQFQVYDETGYFITFAEGLDSALRSSLPMLLLAMSLLASSLATSTKLPPTDDPFHWRTNSTESPIDFTKNDLLLGSQDAFFWFLVPIFGLISVGVCLVINYVALALIFLLTSIYGFLRSKSGYIRRDEKGNLPIFSSASPRRRLVNSAILLALVSTVIPYQFAYMVACIVQLATSVRASWHAKEAKSTTHYNFANFAYSIFLLMLWILPINALVLLVWAHNLVVHWFMPFSSHHNVLSIMPFVLLVEAMTTGTMIPRVTTRFKHVTSMLFFFIAIYSAIYGVSYAYLLHHLTNILAAWLVGIYFSASGFSLSRLWRVLEGDEAVQNPASGSHTKKKP</sequence>
<keyword id="KW-0256">Endoplasmic reticulum</keyword>
<keyword id="KW-0325">Glycoprotein</keyword>
<keyword id="KW-0378">Hydrolase</keyword>
<keyword id="KW-0472">Membrane</keyword>
<keyword id="KW-0653">Protein transport</keyword>
<keyword id="KW-1185">Reference proteome</keyword>
<keyword id="KW-0812">Transmembrane</keyword>
<keyword id="KW-1133">Transmembrane helix</keyword>
<keyword id="KW-0813">Transport</keyword>
<comment type="function">
    <text evidence="1">Involved in inositol deacylation of GPI-anchored proteins which plays important roles in the quality control and ER-associated degradation of GPI-anchored proteins.</text>
</comment>
<comment type="subcellular location">
    <subcellularLocation>
        <location evidence="1">Endoplasmic reticulum membrane</location>
        <topology evidence="1">Multi-pass membrane protein</topology>
    </subcellularLocation>
</comment>
<comment type="similarity">
    <text evidence="4">Belongs to the GPI inositol-deacylase family.</text>
</comment>
<comment type="sequence caution" evidence="4">
    <conflict type="erroneous initiation">
        <sequence resource="EMBL-CDS" id="BAE55485"/>
    </conflict>
</comment>
<evidence type="ECO:0000250" key="1"/>
<evidence type="ECO:0000255" key="2"/>
<evidence type="ECO:0000256" key="3">
    <source>
        <dbReference type="SAM" id="MobiDB-lite"/>
    </source>
</evidence>
<evidence type="ECO:0000305" key="4"/>
<feature type="chain" id="PRO_0000277630" description="GPI inositol-deacylase">
    <location>
        <begin position="1"/>
        <end position="1102"/>
    </location>
</feature>
<feature type="transmembrane region" description="Helical" evidence="2">
    <location>
        <begin position="121"/>
        <end position="141"/>
    </location>
</feature>
<feature type="transmembrane region" description="Helical" evidence="2">
    <location>
        <begin position="744"/>
        <end position="764"/>
    </location>
</feature>
<feature type="transmembrane region" description="Helical" evidence="2">
    <location>
        <begin position="790"/>
        <end position="810"/>
    </location>
</feature>
<feature type="transmembrane region" description="Helical" evidence="2">
    <location>
        <begin position="867"/>
        <end position="887"/>
    </location>
</feature>
<feature type="transmembrane region" description="Helical" evidence="2">
    <location>
        <begin position="914"/>
        <end position="934"/>
    </location>
</feature>
<feature type="transmembrane region" description="Helical" evidence="2">
    <location>
        <begin position="964"/>
        <end position="984"/>
    </location>
</feature>
<feature type="transmembrane region" description="Helical" evidence="2">
    <location>
        <begin position="1001"/>
        <end position="1021"/>
    </location>
</feature>
<feature type="transmembrane region" description="Helical" evidence="2">
    <location>
        <begin position="1033"/>
        <end position="1053"/>
    </location>
</feature>
<feature type="transmembrane region" description="Helical" evidence="2">
    <location>
        <begin position="1056"/>
        <end position="1076"/>
    </location>
</feature>
<feature type="region of interest" description="Disordered" evidence="3">
    <location>
        <begin position="1"/>
        <end position="90"/>
    </location>
</feature>
<feature type="compositionally biased region" description="Polar residues" evidence="3">
    <location>
        <begin position="58"/>
        <end position="70"/>
    </location>
</feature>
<feature type="compositionally biased region" description="Low complexity" evidence="3">
    <location>
        <begin position="72"/>
        <end position="83"/>
    </location>
</feature>
<feature type="active site" evidence="1">
    <location>
        <position position="308"/>
    </location>
</feature>
<feature type="glycosylation site" description="N-linked (GlcNAc...) asparagine" evidence="2">
    <location>
        <position position="66"/>
    </location>
</feature>
<feature type="glycosylation site" description="N-linked (GlcNAc...) asparagine" evidence="2">
    <location>
        <position position="824"/>
    </location>
</feature>
<proteinExistence type="inferred from homology"/>